<keyword id="KW-0687">Ribonucleoprotein</keyword>
<keyword id="KW-0689">Ribosomal protein</keyword>
<keyword id="KW-0694">RNA-binding</keyword>
<keyword id="KW-0699">rRNA-binding</keyword>
<proteinExistence type="inferred from homology"/>
<comment type="function">
    <text evidence="1">One of the primary rRNA binding proteins, it binds directly to 16S rRNA where it helps nucleate assembly of the platform of the 30S subunit by binding and bridging several RNA helices of the 16S rRNA.</text>
</comment>
<comment type="function">
    <text evidence="1">Forms an intersubunit bridge (bridge B4) with the 23S rRNA of the 50S subunit in the ribosome.</text>
</comment>
<comment type="subunit">
    <text evidence="1">Part of the 30S ribosomal subunit. Forms a bridge to the 50S subunit in the 70S ribosome, contacting the 23S rRNA.</text>
</comment>
<comment type="similarity">
    <text evidence="1">Belongs to the universal ribosomal protein uS15 family.</text>
</comment>
<name>RS15_STRS7</name>
<feature type="chain" id="PRO_1000214770" description="Small ribosomal subunit protein uS15">
    <location>
        <begin position="1"/>
        <end position="89"/>
    </location>
</feature>
<reference key="1">
    <citation type="journal article" date="2009" name="PLoS Pathog.">
        <title>Genomic evidence for the evolution of Streptococcus equi: host restriction, increased virulence, and genetic exchange with human pathogens.</title>
        <authorList>
            <person name="Holden M.T.G."/>
            <person name="Heather Z."/>
            <person name="Paillot R."/>
            <person name="Steward K.F."/>
            <person name="Webb K."/>
            <person name="Ainslie F."/>
            <person name="Jourdan T."/>
            <person name="Bason N.C."/>
            <person name="Holroyd N.E."/>
            <person name="Mungall K."/>
            <person name="Quail M.A."/>
            <person name="Sanders M."/>
            <person name="Simmonds M."/>
            <person name="Willey D."/>
            <person name="Brooks K."/>
            <person name="Aanensen D.M."/>
            <person name="Spratt B.G."/>
            <person name="Jolley K.A."/>
            <person name="Maiden M.C.J."/>
            <person name="Kehoe M."/>
            <person name="Chanter N."/>
            <person name="Bentley S.D."/>
            <person name="Robinson C."/>
            <person name="Maskell D.J."/>
            <person name="Parkhill J."/>
            <person name="Waller A.S."/>
        </authorList>
    </citation>
    <scope>NUCLEOTIDE SEQUENCE [LARGE SCALE GENOMIC DNA]</scope>
    <source>
        <strain>H70</strain>
    </source>
</reference>
<sequence>MAISKEKKNEIIAQYARHEGDTGSVEVQVAVLTWEINHLNNHIKEHKKDHATYRGLMKKIGHRRNLLAYLRRTDVNRYRELIQSLGLRR</sequence>
<organism>
    <name type="scientific">Streptococcus equi subsp. zooepidemicus (strain H70)</name>
    <dbReference type="NCBI Taxonomy" id="553483"/>
    <lineage>
        <taxon>Bacteria</taxon>
        <taxon>Bacillati</taxon>
        <taxon>Bacillota</taxon>
        <taxon>Bacilli</taxon>
        <taxon>Lactobacillales</taxon>
        <taxon>Streptococcaceae</taxon>
        <taxon>Streptococcus</taxon>
    </lineage>
</organism>
<dbReference type="EMBL" id="FM204884">
    <property type="protein sequence ID" value="CAW97937.1"/>
    <property type="molecule type" value="Genomic_DNA"/>
</dbReference>
<dbReference type="SMR" id="C0MFA8"/>
<dbReference type="KEGG" id="seq:SZO_02090"/>
<dbReference type="eggNOG" id="COG0184">
    <property type="taxonomic scope" value="Bacteria"/>
</dbReference>
<dbReference type="HOGENOM" id="CLU_148518_0_0_9"/>
<dbReference type="Proteomes" id="UP000001368">
    <property type="component" value="Chromosome"/>
</dbReference>
<dbReference type="GO" id="GO:0022627">
    <property type="term" value="C:cytosolic small ribosomal subunit"/>
    <property type="evidence" value="ECO:0007669"/>
    <property type="project" value="TreeGrafter"/>
</dbReference>
<dbReference type="GO" id="GO:0019843">
    <property type="term" value="F:rRNA binding"/>
    <property type="evidence" value="ECO:0007669"/>
    <property type="project" value="UniProtKB-UniRule"/>
</dbReference>
<dbReference type="GO" id="GO:0003735">
    <property type="term" value="F:structural constituent of ribosome"/>
    <property type="evidence" value="ECO:0007669"/>
    <property type="project" value="InterPro"/>
</dbReference>
<dbReference type="GO" id="GO:0006412">
    <property type="term" value="P:translation"/>
    <property type="evidence" value="ECO:0007669"/>
    <property type="project" value="UniProtKB-UniRule"/>
</dbReference>
<dbReference type="CDD" id="cd00353">
    <property type="entry name" value="Ribosomal_S15p_S13e"/>
    <property type="match status" value="1"/>
</dbReference>
<dbReference type="FunFam" id="1.10.287.10:FF:000002">
    <property type="entry name" value="30S ribosomal protein S15"/>
    <property type="match status" value="1"/>
</dbReference>
<dbReference type="Gene3D" id="6.10.250.3130">
    <property type="match status" value="1"/>
</dbReference>
<dbReference type="Gene3D" id="1.10.287.10">
    <property type="entry name" value="S15/NS1, RNA-binding"/>
    <property type="match status" value="1"/>
</dbReference>
<dbReference type="HAMAP" id="MF_01343_B">
    <property type="entry name" value="Ribosomal_uS15_B"/>
    <property type="match status" value="1"/>
</dbReference>
<dbReference type="InterPro" id="IPR000589">
    <property type="entry name" value="Ribosomal_uS15"/>
</dbReference>
<dbReference type="InterPro" id="IPR005290">
    <property type="entry name" value="Ribosomal_uS15_bac-type"/>
</dbReference>
<dbReference type="InterPro" id="IPR009068">
    <property type="entry name" value="uS15_NS1_RNA-bd_sf"/>
</dbReference>
<dbReference type="NCBIfam" id="TIGR00952">
    <property type="entry name" value="S15_bact"/>
    <property type="match status" value="1"/>
</dbReference>
<dbReference type="PANTHER" id="PTHR23321">
    <property type="entry name" value="RIBOSOMAL PROTEIN S15, BACTERIAL AND ORGANELLAR"/>
    <property type="match status" value="1"/>
</dbReference>
<dbReference type="PANTHER" id="PTHR23321:SF26">
    <property type="entry name" value="SMALL RIBOSOMAL SUBUNIT PROTEIN US15M"/>
    <property type="match status" value="1"/>
</dbReference>
<dbReference type="Pfam" id="PF00312">
    <property type="entry name" value="Ribosomal_S15"/>
    <property type="match status" value="1"/>
</dbReference>
<dbReference type="SMART" id="SM01387">
    <property type="entry name" value="Ribosomal_S15"/>
    <property type="match status" value="1"/>
</dbReference>
<dbReference type="SUPFAM" id="SSF47060">
    <property type="entry name" value="S15/NS1 RNA-binding domain"/>
    <property type="match status" value="1"/>
</dbReference>
<dbReference type="PROSITE" id="PS00362">
    <property type="entry name" value="RIBOSOMAL_S15"/>
    <property type="match status" value="1"/>
</dbReference>
<protein>
    <recommendedName>
        <fullName evidence="1">Small ribosomal subunit protein uS15</fullName>
    </recommendedName>
    <alternativeName>
        <fullName evidence="2">30S ribosomal protein S15</fullName>
    </alternativeName>
</protein>
<gene>
    <name evidence="1" type="primary">rpsO</name>
    <name type="ordered locus">SZO_02090</name>
</gene>
<accession>C0MFA8</accession>
<evidence type="ECO:0000255" key="1">
    <source>
        <dbReference type="HAMAP-Rule" id="MF_01343"/>
    </source>
</evidence>
<evidence type="ECO:0000305" key="2"/>